<gene>
    <name evidence="1" type="primary">katG</name>
    <name type="ordered locus">blr0778</name>
</gene>
<name>KATG_BRADU</name>
<protein>
    <recommendedName>
        <fullName evidence="1">Catalase-peroxidase</fullName>
        <shortName evidence="1">CP</shortName>
        <ecNumber evidence="1">1.11.1.21</ecNumber>
    </recommendedName>
    <alternativeName>
        <fullName evidence="1">Peroxidase/catalase</fullName>
    </alternativeName>
</protein>
<feature type="chain" id="PRO_0000354727" description="Catalase-peroxidase">
    <location>
        <begin position="1"/>
        <end position="779"/>
    </location>
</feature>
<feature type="active site" description="Proton acceptor" evidence="1">
    <location>
        <position position="149"/>
    </location>
</feature>
<feature type="binding site" description="axial binding residue" evidence="1">
    <location>
        <position position="311"/>
    </location>
    <ligand>
        <name>heme b</name>
        <dbReference type="ChEBI" id="CHEBI:60344"/>
    </ligand>
    <ligandPart>
        <name>Fe</name>
        <dbReference type="ChEBI" id="CHEBI:18248"/>
    </ligandPart>
</feature>
<feature type="site" description="Transition state stabilizer" evidence="1">
    <location>
        <position position="145"/>
    </location>
</feature>
<feature type="cross-link" description="Tryptophyl-tyrosyl-methioninium (Trp-Tyr) (with M-296)" evidence="1">
    <location>
        <begin position="148"/>
        <end position="270"/>
    </location>
</feature>
<feature type="cross-link" description="Tryptophyl-tyrosyl-methioninium (Tyr-Met) (with W-148)" evidence="1">
    <location>
        <begin position="270"/>
        <end position="296"/>
    </location>
</feature>
<keyword id="KW-0349">Heme</keyword>
<keyword id="KW-0376">Hydrogen peroxide</keyword>
<keyword id="KW-0408">Iron</keyword>
<keyword id="KW-0479">Metal-binding</keyword>
<keyword id="KW-0560">Oxidoreductase</keyword>
<keyword id="KW-0575">Peroxidase</keyword>
<keyword id="KW-1185">Reference proteome</keyword>
<reference key="1">
    <citation type="journal article" date="2002" name="DNA Res.">
        <title>Complete genomic sequence of nitrogen-fixing symbiotic bacterium Bradyrhizobium japonicum USDA110.</title>
        <authorList>
            <person name="Kaneko T."/>
            <person name="Nakamura Y."/>
            <person name="Sato S."/>
            <person name="Minamisawa K."/>
            <person name="Uchiumi T."/>
            <person name="Sasamoto S."/>
            <person name="Watanabe A."/>
            <person name="Idesawa K."/>
            <person name="Iriguchi M."/>
            <person name="Kawashima K."/>
            <person name="Kohara M."/>
            <person name="Matsumoto M."/>
            <person name="Shimpo S."/>
            <person name="Tsuruoka H."/>
            <person name="Wada T."/>
            <person name="Yamada M."/>
            <person name="Tabata S."/>
        </authorList>
    </citation>
    <scope>NUCLEOTIDE SEQUENCE [LARGE SCALE GENOMIC DNA]</scope>
    <source>
        <strain>JCM 10833 / BCRC 13528 / IAM 13628 / NBRC 14792 / USDA 110</strain>
    </source>
</reference>
<accession>Q89WB4</accession>
<organism>
    <name type="scientific">Bradyrhizobium diazoefficiens (strain JCM 10833 / BCRC 13528 / IAM 13628 / NBRC 14792 / USDA 110)</name>
    <dbReference type="NCBI Taxonomy" id="224911"/>
    <lineage>
        <taxon>Bacteria</taxon>
        <taxon>Pseudomonadati</taxon>
        <taxon>Pseudomonadota</taxon>
        <taxon>Alphaproteobacteria</taxon>
        <taxon>Hyphomicrobiales</taxon>
        <taxon>Nitrobacteraceae</taxon>
        <taxon>Bradyrhizobium</taxon>
    </lineage>
</organism>
<evidence type="ECO:0000255" key="1">
    <source>
        <dbReference type="HAMAP-Rule" id="MF_01961"/>
    </source>
</evidence>
<proteinExistence type="inferred from homology"/>
<comment type="function">
    <text evidence="1">Bifunctional enzyme with both catalase and broad-spectrum peroxidase activity.</text>
</comment>
<comment type="catalytic activity">
    <reaction evidence="1">
        <text>H2O2 + AH2 = A + 2 H2O</text>
        <dbReference type="Rhea" id="RHEA:30275"/>
        <dbReference type="ChEBI" id="CHEBI:13193"/>
        <dbReference type="ChEBI" id="CHEBI:15377"/>
        <dbReference type="ChEBI" id="CHEBI:16240"/>
        <dbReference type="ChEBI" id="CHEBI:17499"/>
        <dbReference type="EC" id="1.11.1.21"/>
    </reaction>
</comment>
<comment type="catalytic activity">
    <reaction evidence="1">
        <text>2 H2O2 = O2 + 2 H2O</text>
        <dbReference type="Rhea" id="RHEA:20309"/>
        <dbReference type="ChEBI" id="CHEBI:15377"/>
        <dbReference type="ChEBI" id="CHEBI:15379"/>
        <dbReference type="ChEBI" id="CHEBI:16240"/>
        <dbReference type="EC" id="1.11.1.21"/>
    </reaction>
</comment>
<comment type="cofactor">
    <cofactor evidence="1">
        <name>heme b</name>
        <dbReference type="ChEBI" id="CHEBI:60344"/>
    </cofactor>
    <text evidence="1">Binds 1 heme b (iron(II)-protoporphyrin IX) group per dimer.</text>
</comment>
<comment type="subunit">
    <text evidence="1">Homodimer or homotetramer.</text>
</comment>
<comment type="PTM">
    <text evidence="1">Formation of the three residue Trp-Tyr-Met cross-link is important for the catalase, but not the peroxidase activity of the enzyme.</text>
</comment>
<comment type="similarity">
    <text evidence="1">Belongs to the peroxidase family. Peroxidase/catalase subfamily.</text>
</comment>
<sequence length="779" mass="85664">MAVTRQRVEIPELAHRHVDHQKILSQRSLKSTSPDGMRGLEWFYLVKGASSTPPEEVFMDDTSKCPFSGGKRVPANRDWWPTQLSIEMLHKNSGLSDPMGEEFDYAKEFKTLDLNAVIKDLTALMTDSQEWWPADFGHYGGLMIRMAWHSAGTYRITDGRGGAGAGQQRFAPLNSWPDNANLDKARRLLWPIKQKYGRKISWADLMVLAGNVALESMGFKTFGFAGGRADVWEPEELYWGPEGTWLGDERYSGERQLAEPLGAVQMGLIYVNPEGPNGKPDPIAAAKDIRETFFRMAMNDEETVALIAGGHTFGKTHGAGDPSLVGPEPEAGALEDQGLGWKSKHASGLAGDSITSGLEVTWTTTPTKWSNNFFENLFKYEWELTKSPGGANQWTAKGAEAIIPDAFDKSKKHRPTMLTTDLSLRLDPAYEKISRRFLENPDQFADAFARAWFKLTHRDMGPIQRYLGPLVPKETLIWQDPIPAVNHELVSDQDIAALKTKILASGLSVPELVSTAWASASTFRGSDKRGGANGARIRLSPQKDWEVNQPAQLSKVLGKLEAIQKEFNASAGAKKVSLADLIVLGGTAAVEKAAKDAGVDVKVAFTPGRMDASQEQTDAASFAPLEPRADGFRNYVGKRQQFLQQEEALVDRAQLLKLTGPELTVLVGGLRVLGANANGSKHGVLTAKVGALSNDFFVNLLDMSTQWAPAADGTYEARDRKTNAVKWTGTRADLIFGAHSQLRAYAEVYATSDSKEQFVKDFAKAWTKVMNLDRFDLAA</sequence>
<dbReference type="EC" id="1.11.1.21" evidence="1"/>
<dbReference type="EMBL" id="BA000040">
    <property type="protein sequence ID" value="BAC46043.1"/>
    <property type="molecule type" value="Genomic_DNA"/>
</dbReference>
<dbReference type="RefSeq" id="NP_767418.1">
    <property type="nucleotide sequence ID" value="NC_004463.1"/>
</dbReference>
<dbReference type="SMR" id="Q89WB4"/>
<dbReference type="FunCoup" id="Q89WB4">
    <property type="interactions" value="343"/>
</dbReference>
<dbReference type="STRING" id="224911.AAV28_00740"/>
<dbReference type="PeroxiBase" id="2347">
    <property type="entry name" value="BjaCP01_USDA110"/>
</dbReference>
<dbReference type="EnsemblBacteria" id="BAC46043">
    <property type="protein sequence ID" value="BAC46043"/>
    <property type="gene ID" value="BAC46043"/>
</dbReference>
<dbReference type="KEGG" id="bja:blr0778"/>
<dbReference type="PATRIC" id="fig|224911.5.peg.802"/>
<dbReference type="eggNOG" id="COG0376">
    <property type="taxonomic scope" value="Bacteria"/>
</dbReference>
<dbReference type="HOGENOM" id="CLU_025424_2_0_5"/>
<dbReference type="InParanoid" id="Q89WB4"/>
<dbReference type="OrthoDB" id="9759743at2"/>
<dbReference type="PhylomeDB" id="Q89WB4"/>
<dbReference type="Proteomes" id="UP000002526">
    <property type="component" value="Chromosome"/>
</dbReference>
<dbReference type="GO" id="GO:0005829">
    <property type="term" value="C:cytosol"/>
    <property type="evidence" value="ECO:0000318"/>
    <property type="project" value="GO_Central"/>
</dbReference>
<dbReference type="GO" id="GO:0004096">
    <property type="term" value="F:catalase activity"/>
    <property type="evidence" value="ECO:0000318"/>
    <property type="project" value="GO_Central"/>
</dbReference>
<dbReference type="GO" id="GO:0020037">
    <property type="term" value="F:heme binding"/>
    <property type="evidence" value="ECO:0000318"/>
    <property type="project" value="GO_Central"/>
</dbReference>
<dbReference type="GO" id="GO:0046872">
    <property type="term" value="F:metal ion binding"/>
    <property type="evidence" value="ECO:0007669"/>
    <property type="project" value="UniProtKB-KW"/>
</dbReference>
<dbReference type="GO" id="GO:0070301">
    <property type="term" value="P:cellular response to hydrogen peroxide"/>
    <property type="evidence" value="ECO:0000318"/>
    <property type="project" value="GO_Central"/>
</dbReference>
<dbReference type="GO" id="GO:0042744">
    <property type="term" value="P:hydrogen peroxide catabolic process"/>
    <property type="evidence" value="ECO:0000318"/>
    <property type="project" value="GO_Central"/>
</dbReference>
<dbReference type="CDD" id="cd00649">
    <property type="entry name" value="catalase_peroxidase_1"/>
    <property type="match status" value="1"/>
</dbReference>
<dbReference type="CDD" id="cd08200">
    <property type="entry name" value="catalase_peroxidase_2"/>
    <property type="match status" value="1"/>
</dbReference>
<dbReference type="FunFam" id="1.10.420.10:FF:000002">
    <property type="entry name" value="Catalase-peroxidase"/>
    <property type="match status" value="1"/>
</dbReference>
<dbReference type="FunFam" id="1.10.420.10:FF:000004">
    <property type="entry name" value="Catalase-peroxidase"/>
    <property type="match status" value="1"/>
</dbReference>
<dbReference type="FunFam" id="1.10.520.10:FF:000002">
    <property type="entry name" value="Catalase-peroxidase"/>
    <property type="match status" value="1"/>
</dbReference>
<dbReference type="FunFam" id="1.10.520.10:FF:000004">
    <property type="entry name" value="Catalase-peroxidase"/>
    <property type="match status" value="1"/>
</dbReference>
<dbReference type="Gene3D" id="1.10.520.10">
    <property type="match status" value="2"/>
</dbReference>
<dbReference type="Gene3D" id="1.10.420.10">
    <property type="entry name" value="Peroxidase, domain 2"/>
    <property type="match status" value="2"/>
</dbReference>
<dbReference type="HAMAP" id="MF_01961">
    <property type="entry name" value="Catal_peroxid"/>
    <property type="match status" value="1"/>
</dbReference>
<dbReference type="InterPro" id="IPR000763">
    <property type="entry name" value="Catalase_peroxidase"/>
</dbReference>
<dbReference type="InterPro" id="IPR002016">
    <property type="entry name" value="Haem_peroxidase"/>
</dbReference>
<dbReference type="InterPro" id="IPR010255">
    <property type="entry name" value="Haem_peroxidase_sf"/>
</dbReference>
<dbReference type="InterPro" id="IPR019794">
    <property type="entry name" value="Peroxidases_AS"/>
</dbReference>
<dbReference type="InterPro" id="IPR019793">
    <property type="entry name" value="Peroxidases_heam-ligand_BS"/>
</dbReference>
<dbReference type="NCBIfam" id="TIGR00198">
    <property type="entry name" value="cat_per_HPI"/>
    <property type="match status" value="1"/>
</dbReference>
<dbReference type="NCBIfam" id="NF011635">
    <property type="entry name" value="PRK15061.1"/>
    <property type="match status" value="1"/>
</dbReference>
<dbReference type="PANTHER" id="PTHR30555:SF0">
    <property type="entry name" value="CATALASE-PEROXIDASE"/>
    <property type="match status" value="1"/>
</dbReference>
<dbReference type="PANTHER" id="PTHR30555">
    <property type="entry name" value="HYDROPEROXIDASE I, BIFUNCTIONAL CATALASE-PEROXIDASE"/>
    <property type="match status" value="1"/>
</dbReference>
<dbReference type="Pfam" id="PF00141">
    <property type="entry name" value="peroxidase"/>
    <property type="match status" value="2"/>
</dbReference>
<dbReference type="PRINTS" id="PR00460">
    <property type="entry name" value="BPEROXIDASE"/>
</dbReference>
<dbReference type="PRINTS" id="PR00458">
    <property type="entry name" value="PEROXIDASE"/>
</dbReference>
<dbReference type="SUPFAM" id="SSF48113">
    <property type="entry name" value="Heme-dependent peroxidases"/>
    <property type="match status" value="2"/>
</dbReference>
<dbReference type="PROSITE" id="PS00435">
    <property type="entry name" value="PEROXIDASE_1"/>
    <property type="match status" value="1"/>
</dbReference>
<dbReference type="PROSITE" id="PS00436">
    <property type="entry name" value="PEROXIDASE_2"/>
    <property type="match status" value="1"/>
</dbReference>
<dbReference type="PROSITE" id="PS50873">
    <property type="entry name" value="PEROXIDASE_4"/>
    <property type="match status" value="1"/>
</dbReference>